<gene>
    <name evidence="1" type="primary">recR</name>
    <name type="ordered locus">BQ02180</name>
</gene>
<name>RECR_BARQU</name>
<accession>Q6G0M8</accession>
<comment type="function">
    <text evidence="1">May play a role in DNA repair. It seems to be involved in an RecBC-independent recombinational process of DNA repair. It may act with RecF and RecO.</text>
</comment>
<comment type="similarity">
    <text evidence="1">Belongs to the RecR family.</text>
</comment>
<proteinExistence type="inferred from homology"/>
<organism>
    <name type="scientific">Bartonella quintana (strain Toulouse)</name>
    <name type="common">Rochalimaea quintana</name>
    <dbReference type="NCBI Taxonomy" id="283165"/>
    <lineage>
        <taxon>Bacteria</taxon>
        <taxon>Pseudomonadati</taxon>
        <taxon>Pseudomonadota</taxon>
        <taxon>Alphaproteobacteria</taxon>
        <taxon>Hyphomicrobiales</taxon>
        <taxon>Bartonellaceae</taxon>
        <taxon>Bartonella</taxon>
    </lineage>
</organism>
<sequence length="201" mass="21745">MSKHIAGPEIERLIQLLARIPGFGPRSARRAALYLIKKKETLLEPLGAAIQAAVDKVCICSVCGNVDTTDPCSICRDPRRDDTTIIVVEDVADLWALERARTLAARYHVLGGRLSPLDGIGPDELNITSLVQRVVQNPIMEIILAVNATVEGQTTAHYITDQLSNFSVKITRLAHGVPVGGELDYLDDGTLAAALQARTNL</sequence>
<dbReference type="EMBL" id="BX897700">
    <property type="protein sequence ID" value="CAF25721.1"/>
    <property type="molecule type" value="Genomic_DNA"/>
</dbReference>
<dbReference type="RefSeq" id="WP_011179035.1">
    <property type="nucleotide sequence ID" value="NC_005955.1"/>
</dbReference>
<dbReference type="SMR" id="Q6G0M8"/>
<dbReference type="KEGG" id="bqu:BQ02180"/>
<dbReference type="eggNOG" id="COG0353">
    <property type="taxonomic scope" value="Bacteria"/>
</dbReference>
<dbReference type="HOGENOM" id="CLU_060739_1_1_5"/>
<dbReference type="OrthoDB" id="9802672at2"/>
<dbReference type="Proteomes" id="UP000000597">
    <property type="component" value="Chromosome"/>
</dbReference>
<dbReference type="GO" id="GO:0003677">
    <property type="term" value="F:DNA binding"/>
    <property type="evidence" value="ECO:0007669"/>
    <property type="project" value="UniProtKB-UniRule"/>
</dbReference>
<dbReference type="GO" id="GO:0008270">
    <property type="term" value="F:zinc ion binding"/>
    <property type="evidence" value="ECO:0007669"/>
    <property type="project" value="UniProtKB-KW"/>
</dbReference>
<dbReference type="GO" id="GO:0006310">
    <property type="term" value="P:DNA recombination"/>
    <property type="evidence" value="ECO:0007669"/>
    <property type="project" value="UniProtKB-UniRule"/>
</dbReference>
<dbReference type="GO" id="GO:0006281">
    <property type="term" value="P:DNA repair"/>
    <property type="evidence" value="ECO:0007669"/>
    <property type="project" value="UniProtKB-UniRule"/>
</dbReference>
<dbReference type="CDD" id="cd01025">
    <property type="entry name" value="TOPRIM_recR"/>
    <property type="match status" value="1"/>
</dbReference>
<dbReference type="Gene3D" id="3.40.1360.10">
    <property type="match status" value="1"/>
</dbReference>
<dbReference type="Gene3D" id="6.10.250.240">
    <property type="match status" value="1"/>
</dbReference>
<dbReference type="Gene3D" id="1.10.8.420">
    <property type="entry name" value="RecR Domain 1"/>
    <property type="match status" value="1"/>
</dbReference>
<dbReference type="HAMAP" id="MF_00017">
    <property type="entry name" value="RecR"/>
    <property type="match status" value="1"/>
</dbReference>
<dbReference type="InterPro" id="IPR000093">
    <property type="entry name" value="DNA_Rcmb_RecR"/>
</dbReference>
<dbReference type="InterPro" id="IPR023627">
    <property type="entry name" value="Rcmb_RecR"/>
</dbReference>
<dbReference type="InterPro" id="IPR015967">
    <property type="entry name" value="Rcmb_RecR_Znf"/>
</dbReference>
<dbReference type="InterPro" id="IPR006171">
    <property type="entry name" value="TOPRIM_dom"/>
</dbReference>
<dbReference type="InterPro" id="IPR034137">
    <property type="entry name" value="TOPRIM_RecR"/>
</dbReference>
<dbReference type="NCBIfam" id="TIGR00615">
    <property type="entry name" value="recR"/>
    <property type="match status" value="1"/>
</dbReference>
<dbReference type="PANTHER" id="PTHR30446">
    <property type="entry name" value="RECOMBINATION PROTEIN RECR"/>
    <property type="match status" value="1"/>
</dbReference>
<dbReference type="PANTHER" id="PTHR30446:SF0">
    <property type="entry name" value="RECOMBINATION PROTEIN RECR"/>
    <property type="match status" value="1"/>
</dbReference>
<dbReference type="Pfam" id="PF21175">
    <property type="entry name" value="RecR_C"/>
    <property type="match status" value="1"/>
</dbReference>
<dbReference type="Pfam" id="PF21176">
    <property type="entry name" value="RecR_HhH"/>
    <property type="match status" value="1"/>
</dbReference>
<dbReference type="Pfam" id="PF02132">
    <property type="entry name" value="RecR_ZnF"/>
    <property type="match status" value="1"/>
</dbReference>
<dbReference type="Pfam" id="PF13662">
    <property type="entry name" value="Toprim_4"/>
    <property type="match status" value="1"/>
</dbReference>
<dbReference type="SMART" id="SM00493">
    <property type="entry name" value="TOPRIM"/>
    <property type="match status" value="1"/>
</dbReference>
<dbReference type="SUPFAM" id="SSF111304">
    <property type="entry name" value="Recombination protein RecR"/>
    <property type="match status" value="1"/>
</dbReference>
<dbReference type="PROSITE" id="PS01300">
    <property type="entry name" value="RECR"/>
    <property type="match status" value="1"/>
</dbReference>
<dbReference type="PROSITE" id="PS50880">
    <property type="entry name" value="TOPRIM"/>
    <property type="match status" value="1"/>
</dbReference>
<protein>
    <recommendedName>
        <fullName evidence="1">Recombination protein RecR</fullName>
    </recommendedName>
</protein>
<evidence type="ECO:0000255" key="1">
    <source>
        <dbReference type="HAMAP-Rule" id="MF_00017"/>
    </source>
</evidence>
<feature type="chain" id="PRO_0000190286" description="Recombination protein RecR">
    <location>
        <begin position="1"/>
        <end position="201"/>
    </location>
</feature>
<feature type="domain" description="Toprim" evidence="1">
    <location>
        <begin position="83"/>
        <end position="178"/>
    </location>
</feature>
<feature type="zinc finger region" description="C4-type" evidence="1">
    <location>
        <begin position="60"/>
        <end position="75"/>
    </location>
</feature>
<keyword id="KW-0227">DNA damage</keyword>
<keyword id="KW-0233">DNA recombination</keyword>
<keyword id="KW-0234">DNA repair</keyword>
<keyword id="KW-0479">Metal-binding</keyword>
<keyword id="KW-0862">Zinc</keyword>
<keyword id="KW-0863">Zinc-finger</keyword>
<reference key="1">
    <citation type="journal article" date="2004" name="Proc. Natl. Acad. Sci. U.S.A.">
        <title>The louse-borne human pathogen Bartonella quintana is a genomic derivative of the zoonotic agent Bartonella henselae.</title>
        <authorList>
            <person name="Alsmark U.C.M."/>
            <person name="Frank A.C."/>
            <person name="Karlberg E.O."/>
            <person name="Legault B.-A."/>
            <person name="Ardell D.H."/>
            <person name="Canbaeck B."/>
            <person name="Eriksson A.-S."/>
            <person name="Naeslund A.K."/>
            <person name="Handley S.A."/>
            <person name="Huvet M."/>
            <person name="La Scola B."/>
            <person name="Holmberg M."/>
            <person name="Andersson S.G.E."/>
        </authorList>
    </citation>
    <scope>NUCLEOTIDE SEQUENCE [LARGE SCALE GENOMIC DNA]</scope>
    <source>
        <strain>Toulouse</strain>
    </source>
</reference>